<name>DNAK_CHLCV</name>
<sequence>MSEQKKSSKIIGIDLGTTNSCVSVMEGGQAKVITSSEGTRTTPSIVAFKGNETLVGIPAKRQAVTNPEKTLASTKRFIGRKHSEVESEIKTVPYKVASGSNGDVVFLVDGKQYTPEEIGAQVLIKMKETAEAYLGEPVTEAVITVPAYFNDSQRASTKDAGRIAGLDVKRIIPEPTAAALAYGIDKAGDKKIAVFDLGGGTFDISILEIGDGVFEVLSTNGDTHLGGDDFDEVIIKWMIEEFKKQEGIDLSKDNMALQRLKDAAEKAKIELSGVSSTEINQPFITMDASGPKHLTLTLTRAHFEKLASTLLERTKAPCQKALADAKLSASDIDDVLLVGGMSRMPAVQEVVKSIFGKEPNKGVNPDEVVAIGAAIQGGVLGGEVKDVLLLDVIPLSLGIETLGGVMTPLVERNTTIPTQKKQIFSTAADNQPAVTIVVLQGERPMAKDNKEIGRFDLTDIPPAPRGHPQIEVTFDIDANGILHVSAKDAASGREQKIRIEASSGLKEDEIQRMINDAEKHKEEDKKRREASDARNEADSMIFRAEKAISDYKDNIPESLVKEIEERIEKVRTVLKEEAPVEKIKDASEELSRHMQKIGEAMQSQSASAAASSAANAQGGPNINTEDLKKHSFSTKPPAGNSASSNSNNENIEEADVEIVDKPND</sequence>
<protein>
    <recommendedName>
        <fullName evidence="1">Chaperone protein DnaK</fullName>
    </recommendedName>
    <alternativeName>
        <fullName evidence="1">HSP70</fullName>
    </alternativeName>
    <alternativeName>
        <fullName evidence="1">Heat shock 70 kDa protein</fullName>
    </alternativeName>
    <alternativeName>
        <fullName evidence="1">Heat shock protein 70</fullName>
    </alternativeName>
</protein>
<feature type="chain" id="PRO_0000078442" description="Chaperone protein DnaK">
    <location>
        <begin position="1"/>
        <end position="664"/>
    </location>
</feature>
<feature type="region of interest" description="Disordered" evidence="2">
    <location>
        <begin position="516"/>
        <end position="538"/>
    </location>
</feature>
<feature type="region of interest" description="Disordered" evidence="2">
    <location>
        <begin position="578"/>
        <end position="664"/>
    </location>
</feature>
<feature type="compositionally biased region" description="Basic and acidic residues" evidence="2">
    <location>
        <begin position="578"/>
        <end position="592"/>
    </location>
</feature>
<feature type="compositionally biased region" description="Low complexity" evidence="2">
    <location>
        <begin position="600"/>
        <end position="617"/>
    </location>
</feature>
<feature type="compositionally biased region" description="Low complexity" evidence="2">
    <location>
        <begin position="638"/>
        <end position="649"/>
    </location>
</feature>
<feature type="modified residue" description="Phosphothreonine; by autocatalysis" evidence="1">
    <location>
        <position position="201"/>
    </location>
</feature>
<dbReference type="EMBL" id="AE015925">
    <property type="protein sequence ID" value="AAP04992.1"/>
    <property type="molecule type" value="Genomic_DNA"/>
</dbReference>
<dbReference type="RefSeq" id="WP_011006210.1">
    <property type="nucleotide sequence ID" value="NC_003361.3"/>
</dbReference>
<dbReference type="SMR" id="Q824B2"/>
<dbReference type="STRING" id="227941.CCA_00241"/>
<dbReference type="KEGG" id="cca:CCA_00241"/>
<dbReference type="eggNOG" id="COG0443">
    <property type="taxonomic scope" value="Bacteria"/>
</dbReference>
<dbReference type="HOGENOM" id="CLU_005965_2_1_0"/>
<dbReference type="OrthoDB" id="9766019at2"/>
<dbReference type="Proteomes" id="UP000002193">
    <property type="component" value="Chromosome"/>
</dbReference>
<dbReference type="GO" id="GO:0005524">
    <property type="term" value="F:ATP binding"/>
    <property type="evidence" value="ECO:0007669"/>
    <property type="project" value="UniProtKB-UniRule"/>
</dbReference>
<dbReference type="GO" id="GO:0140662">
    <property type="term" value="F:ATP-dependent protein folding chaperone"/>
    <property type="evidence" value="ECO:0007669"/>
    <property type="project" value="InterPro"/>
</dbReference>
<dbReference type="GO" id="GO:0051082">
    <property type="term" value="F:unfolded protein binding"/>
    <property type="evidence" value="ECO:0007669"/>
    <property type="project" value="InterPro"/>
</dbReference>
<dbReference type="CDD" id="cd10234">
    <property type="entry name" value="ASKHA_NBD_HSP70_DnaK-like"/>
    <property type="match status" value="1"/>
</dbReference>
<dbReference type="FunFam" id="2.60.34.10:FF:000014">
    <property type="entry name" value="Chaperone protein DnaK HSP70"/>
    <property type="match status" value="1"/>
</dbReference>
<dbReference type="FunFam" id="3.30.420.40:FF:000020">
    <property type="entry name" value="Chaperone protein HscA homolog"/>
    <property type="match status" value="1"/>
</dbReference>
<dbReference type="FunFam" id="1.20.1270.10:FF:000001">
    <property type="entry name" value="Molecular chaperone DnaK"/>
    <property type="match status" value="1"/>
</dbReference>
<dbReference type="FunFam" id="3.30.420.40:FF:000004">
    <property type="entry name" value="Molecular chaperone DnaK"/>
    <property type="match status" value="1"/>
</dbReference>
<dbReference type="FunFam" id="3.90.640.10:FF:000003">
    <property type="entry name" value="Molecular chaperone DnaK"/>
    <property type="match status" value="1"/>
</dbReference>
<dbReference type="Gene3D" id="1.20.1270.10">
    <property type="match status" value="1"/>
</dbReference>
<dbReference type="Gene3D" id="3.30.420.40">
    <property type="match status" value="2"/>
</dbReference>
<dbReference type="Gene3D" id="3.90.640.10">
    <property type="entry name" value="Actin, Chain A, domain 4"/>
    <property type="match status" value="1"/>
</dbReference>
<dbReference type="Gene3D" id="2.60.34.10">
    <property type="entry name" value="Substrate Binding Domain Of DNAk, Chain A, domain 1"/>
    <property type="match status" value="1"/>
</dbReference>
<dbReference type="HAMAP" id="MF_00332">
    <property type="entry name" value="DnaK"/>
    <property type="match status" value="1"/>
</dbReference>
<dbReference type="InterPro" id="IPR043129">
    <property type="entry name" value="ATPase_NBD"/>
</dbReference>
<dbReference type="InterPro" id="IPR012725">
    <property type="entry name" value="Chaperone_DnaK"/>
</dbReference>
<dbReference type="InterPro" id="IPR018181">
    <property type="entry name" value="Heat_shock_70_CS"/>
</dbReference>
<dbReference type="InterPro" id="IPR029048">
    <property type="entry name" value="HSP70_C_sf"/>
</dbReference>
<dbReference type="InterPro" id="IPR029047">
    <property type="entry name" value="HSP70_peptide-bd_sf"/>
</dbReference>
<dbReference type="InterPro" id="IPR013126">
    <property type="entry name" value="Hsp_70_fam"/>
</dbReference>
<dbReference type="NCBIfam" id="NF001413">
    <property type="entry name" value="PRK00290.1"/>
    <property type="match status" value="1"/>
</dbReference>
<dbReference type="NCBIfam" id="TIGR02350">
    <property type="entry name" value="prok_dnaK"/>
    <property type="match status" value="1"/>
</dbReference>
<dbReference type="PANTHER" id="PTHR19375">
    <property type="entry name" value="HEAT SHOCK PROTEIN 70KDA"/>
    <property type="match status" value="1"/>
</dbReference>
<dbReference type="Pfam" id="PF00012">
    <property type="entry name" value="HSP70"/>
    <property type="match status" value="1"/>
</dbReference>
<dbReference type="PRINTS" id="PR00301">
    <property type="entry name" value="HEATSHOCK70"/>
</dbReference>
<dbReference type="SUPFAM" id="SSF53067">
    <property type="entry name" value="Actin-like ATPase domain"/>
    <property type="match status" value="2"/>
</dbReference>
<dbReference type="SUPFAM" id="SSF100934">
    <property type="entry name" value="Heat shock protein 70kD (HSP70), C-terminal subdomain"/>
    <property type="match status" value="1"/>
</dbReference>
<dbReference type="SUPFAM" id="SSF100920">
    <property type="entry name" value="Heat shock protein 70kD (HSP70), peptide-binding domain"/>
    <property type="match status" value="1"/>
</dbReference>
<dbReference type="PROSITE" id="PS00297">
    <property type="entry name" value="HSP70_1"/>
    <property type="match status" value="1"/>
</dbReference>
<dbReference type="PROSITE" id="PS00329">
    <property type="entry name" value="HSP70_2"/>
    <property type="match status" value="1"/>
</dbReference>
<dbReference type="PROSITE" id="PS01036">
    <property type="entry name" value="HSP70_3"/>
    <property type="match status" value="1"/>
</dbReference>
<accession>Q824B2</accession>
<evidence type="ECO:0000255" key="1">
    <source>
        <dbReference type="HAMAP-Rule" id="MF_00332"/>
    </source>
</evidence>
<evidence type="ECO:0000256" key="2">
    <source>
        <dbReference type="SAM" id="MobiDB-lite"/>
    </source>
</evidence>
<gene>
    <name evidence="1" type="primary">dnaK</name>
    <name type="ordered locus">CCA_00241</name>
</gene>
<reference key="1">
    <citation type="journal article" date="2003" name="Nucleic Acids Res.">
        <title>Genome sequence of Chlamydophila caviae (Chlamydia psittaci GPIC): examining the role of niche-specific genes in the evolution of the Chlamydiaceae.</title>
        <authorList>
            <person name="Read T.D."/>
            <person name="Myers G.S.A."/>
            <person name="Brunham R.C."/>
            <person name="Nelson W.C."/>
            <person name="Paulsen I.T."/>
            <person name="Heidelberg J.F."/>
            <person name="Holtzapple E.K."/>
            <person name="Khouri H.M."/>
            <person name="Federova N.B."/>
            <person name="Carty H.A."/>
            <person name="Umayam L.A."/>
            <person name="Haft D.H."/>
            <person name="Peterson J.D."/>
            <person name="Beanan M.J."/>
            <person name="White O."/>
            <person name="Salzberg S.L."/>
            <person name="Hsia R.-C."/>
            <person name="McClarty G."/>
            <person name="Rank R.G."/>
            <person name="Bavoil P.M."/>
            <person name="Fraser C.M."/>
        </authorList>
    </citation>
    <scope>NUCLEOTIDE SEQUENCE [LARGE SCALE GENOMIC DNA]</scope>
    <source>
        <strain>ATCC VR-813 / DSM 19441 / 03DC25 / GPIC</strain>
    </source>
</reference>
<keyword id="KW-0067">ATP-binding</keyword>
<keyword id="KW-0143">Chaperone</keyword>
<keyword id="KW-0547">Nucleotide-binding</keyword>
<keyword id="KW-0597">Phosphoprotein</keyword>
<keyword id="KW-0346">Stress response</keyword>
<comment type="function">
    <text evidence="1">Acts as a chaperone.</text>
</comment>
<comment type="induction">
    <text evidence="1">By stress conditions e.g. heat shock.</text>
</comment>
<comment type="similarity">
    <text evidence="1">Belongs to the heat shock protein 70 family.</text>
</comment>
<proteinExistence type="inferred from homology"/>
<organism>
    <name type="scientific">Chlamydia caviae (strain ATCC VR-813 / DSM 19441 / 03DC25 / GPIC)</name>
    <name type="common">Chlamydophila caviae</name>
    <dbReference type="NCBI Taxonomy" id="227941"/>
    <lineage>
        <taxon>Bacteria</taxon>
        <taxon>Pseudomonadati</taxon>
        <taxon>Chlamydiota</taxon>
        <taxon>Chlamydiia</taxon>
        <taxon>Chlamydiales</taxon>
        <taxon>Chlamydiaceae</taxon>
        <taxon>Chlamydia/Chlamydophila group</taxon>
        <taxon>Chlamydia</taxon>
    </lineage>
</organism>